<organism>
    <name type="scientific">Mycobacterium tuberculosis (strain CDC 1551 / Oshkosh)</name>
    <dbReference type="NCBI Taxonomy" id="83331"/>
    <lineage>
        <taxon>Bacteria</taxon>
        <taxon>Bacillati</taxon>
        <taxon>Actinomycetota</taxon>
        <taxon>Actinomycetes</taxon>
        <taxon>Mycobacteriales</taxon>
        <taxon>Mycobacteriaceae</taxon>
        <taxon>Mycobacterium</taxon>
        <taxon>Mycobacterium tuberculosis complex</taxon>
    </lineage>
</organism>
<gene>
    <name type="primary">bioA</name>
    <name type="ordered locus">MT1619</name>
</gene>
<keyword id="KW-0032">Aminotransferase</keyword>
<keyword id="KW-0093">Biotin biosynthesis</keyword>
<keyword id="KW-0963">Cytoplasm</keyword>
<keyword id="KW-0663">Pyridoxal phosphate</keyword>
<keyword id="KW-1185">Reference proteome</keyword>
<keyword id="KW-0949">S-adenosyl-L-methionine</keyword>
<keyword id="KW-0808">Transferase</keyword>
<name>BIOA_MYCTO</name>
<feature type="chain" id="PRO_0000426822" description="Adenosylmethionine-8-amino-7-oxononanoate aminotransferase">
    <location>
        <begin position="1"/>
        <end position="437"/>
    </location>
</feature>
<feature type="binding site" evidence="1">
    <location>
        <position position="64"/>
    </location>
    <ligand>
        <name>substrate</name>
    </ligand>
</feature>
<feature type="binding site" evidence="1">
    <location>
        <begin position="124"/>
        <end position="125"/>
    </location>
    <ligand>
        <name>pyridoxal 5'-phosphate</name>
        <dbReference type="ChEBI" id="CHEBI:597326"/>
    </ligand>
</feature>
<feature type="binding site" evidence="1">
    <location>
        <position position="157"/>
    </location>
    <ligand>
        <name>substrate</name>
    </ligand>
</feature>
<feature type="binding site" evidence="1">
    <location>
        <position position="254"/>
    </location>
    <ligand>
        <name>pyridoxal 5'-phosphate</name>
        <dbReference type="ChEBI" id="CHEBI:597326"/>
    </ligand>
</feature>
<feature type="binding site" evidence="1">
    <location>
        <position position="283"/>
    </location>
    <ligand>
        <name>substrate</name>
    </ligand>
</feature>
<feature type="binding site" evidence="1">
    <location>
        <position position="316"/>
    </location>
    <ligand>
        <name>substrate</name>
    </ligand>
</feature>
<feature type="binding site" evidence="1">
    <location>
        <begin position="317"/>
        <end position="318"/>
    </location>
    <ligand>
        <name>pyridoxal 5'-phosphate</name>
        <dbReference type="ChEBI" id="CHEBI:597326"/>
    </ligand>
</feature>
<feature type="binding site" evidence="1">
    <location>
        <position position="400"/>
    </location>
    <ligand>
        <name>substrate</name>
    </ligand>
</feature>
<feature type="site" description="Participates in the substrate recognition with KAPA and in a stacking interaction with the adenine ring of SAM" evidence="1">
    <location>
        <position position="25"/>
    </location>
</feature>
<feature type="modified residue" description="N6-(pyridoxal phosphate)lysine" evidence="1">
    <location>
        <position position="283"/>
    </location>
</feature>
<evidence type="ECO:0000250" key="1"/>
<evidence type="ECO:0000305" key="2"/>
<proteinExistence type="inferred from homology"/>
<protein>
    <recommendedName>
        <fullName>Adenosylmethionine-8-amino-7-oxononanoate aminotransferase</fullName>
        <ecNumber>2.6.1.62</ecNumber>
    </recommendedName>
    <alternativeName>
        <fullName>7,8-diamino-pelargonic acid aminotransferase</fullName>
        <shortName>DAPA AT</shortName>
        <shortName>DAPA aminotransferase</shortName>
    </alternativeName>
    <alternativeName>
        <fullName>7,8-diaminononanoate synthase</fullName>
        <shortName>DANS</shortName>
    </alternativeName>
    <alternativeName>
        <fullName>Diaminopelargonic acid synthase</fullName>
    </alternativeName>
</protein>
<dbReference type="EC" id="2.6.1.62"/>
<dbReference type="EMBL" id="AE000516">
    <property type="protein sequence ID" value="AAK45886.1"/>
    <property type="molecule type" value="Genomic_DNA"/>
</dbReference>
<dbReference type="PIR" id="B70540">
    <property type="entry name" value="B70540"/>
</dbReference>
<dbReference type="RefSeq" id="WP_003407803.1">
    <property type="nucleotide sequence ID" value="NZ_KK341227.1"/>
</dbReference>
<dbReference type="SMR" id="P9WQ80"/>
<dbReference type="KEGG" id="mtc:MT1619"/>
<dbReference type="PATRIC" id="fig|83331.31.peg.1741"/>
<dbReference type="HOGENOM" id="CLU_016922_4_3_11"/>
<dbReference type="BRENDA" id="2.6.1.62">
    <property type="organism ID" value="3445"/>
</dbReference>
<dbReference type="UniPathway" id="UPA00078">
    <property type="reaction ID" value="UER00160"/>
</dbReference>
<dbReference type="EvolutionaryTrace" id="P9WQ80"/>
<dbReference type="Proteomes" id="UP000001020">
    <property type="component" value="Chromosome"/>
</dbReference>
<dbReference type="GO" id="GO:0005737">
    <property type="term" value="C:cytoplasm"/>
    <property type="evidence" value="ECO:0007669"/>
    <property type="project" value="UniProtKB-SubCell"/>
</dbReference>
<dbReference type="GO" id="GO:0004015">
    <property type="term" value="F:adenosylmethionine-8-amino-7-oxononanoate transaminase activity"/>
    <property type="evidence" value="ECO:0007669"/>
    <property type="project" value="UniProtKB-UniRule"/>
</dbReference>
<dbReference type="GO" id="GO:0030170">
    <property type="term" value="F:pyridoxal phosphate binding"/>
    <property type="evidence" value="ECO:0007669"/>
    <property type="project" value="UniProtKB-UniRule"/>
</dbReference>
<dbReference type="GO" id="GO:0009102">
    <property type="term" value="P:biotin biosynthetic process"/>
    <property type="evidence" value="ECO:0007669"/>
    <property type="project" value="UniProtKB-UniRule"/>
</dbReference>
<dbReference type="CDD" id="cd00610">
    <property type="entry name" value="OAT_like"/>
    <property type="match status" value="1"/>
</dbReference>
<dbReference type="FunFam" id="3.40.640.10:FF:000041">
    <property type="entry name" value="Adenosylmethionine-8-amino-7-oxononanoate aminotransferase"/>
    <property type="match status" value="1"/>
</dbReference>
<dbReference type="Gene3D" id="3.90.1150.10">
    <property type="entry name" value="Aspartate Aminotransferase, domain 1"/>
    <property type="match status" value="1"/>
</dbReference>
<dbReference type="Gene3D" id="3.40.640.10">
    <property type="entry name" value="Type I PLP-dependent aspartate aminotransferase-like (Major domain)"/>
    <property type="match status" value="1"/>
</dbReference>
<dbReference type="HAMAP" id="MF_00834">
    <property type="entry name" value="BioA"/>
    <property type="match status" value="1"/>
</dbReference>
<dbReference type="InterPro" id="IPR005814">
    <property type="entry name" value="Aminotrans_3"/>
</dbReference>
<dbReference type="InterPro" id="IPR049704">
    <property type="entry name" value="Aminotrans_3_PPA_site"/>
</dbReference>
<dbReference type="InterPro" id="IPR005815">
    <property type="entry name" value="BioA"/>
</dbReference>
<dbReference type="InterPro" id="IPR015424">
    <property type="entry name" value="PyrdxlP-dep_Trfase"/>
</dbReference>
<dbReference type="InterPro" id="IPR015421">
    <property type="entry name" value="PyrdxlP-dep_Trfase_major"/>
</dbReference>
<dbReference type="InterPro" id="IPR015422">
    <property type="entry name" value="PyrdxlP-dep_Trfase_small"/>
</dbReference>
<dbReference type="NCBIfam" id="TIGR00508">
    <property type="entry name" value="bioA"/>
    <property type="match status" value="1"/>
</dbReference>
<dbReference type="NCBIfam" id="NF004624">
    <property type="entry name" value="PRK05964.1"/>
    <property type="match status" value="1"/>
</dbReference>
<dbReference type="PANTHER" id="PTHR42684">
    <property type="entry name" value="ADENOSYLMETHIONINE-8-AMINO-7-OXONONANOATE AMINOTRANSFERASE"/>
    <property type="match status" value="1"/>
</dbReference>
<dbReference type="PANTHER" id="PTHR42684:SF17">
    <property type="entry name" value="ADENOSYLMETHIONINE-8-AMINO-7-OXONONANOATE AMINOTRANSFERASE"/>
    <property type="match status" value="1"/>
</dbReference>
<dbReference type="Pfam" id="PF00202">
    <property type="entry name" value="Aminotran_3"/>
    <property type="match status" value="1"/>
</dbReference>
<dbReference type="SUPFAM" id="SSF53383">
    <property type="entry name" value="PLP-dependent transferases"/>
    <property type="match status" value="1"/>
</dbReference>
<dbReference type="PROSITE" id="PS00600">
    <property type="entry name" value="AA_TRANSFER_CLASS_3"/>
    <property type="match status" value="1"/>
</dbReference>
<reference key="1">
    <citation type="journal article" date="2002" name="J. Bacteriol.">
        <title>Whole-genome comparison of Mycobacterium tuberculosis clinical and laboratory strains.</title>
        <authorList>
            <person name="Fleischmann R.D."/>
            <person name="Alland D."/>
            <person name="Eisen J.A."/>
            <person name="Carpenter L."/>
            <person name="White O."/>
            <person name="Peterson J.D."/>
            <person name="DeBoy R.T."/>
            <person name="Dodson R.J."/>
            <person name="Gwinn M.L."/>
            <person name="Haft D.H."/>
            <person name="Hickey E.K."/>
            <person name="Kolonay J.F."/>
            <person name="Nelson W.C."/>
            <person name="Umayam L.A."/>
            <person name="Ermolaeva M.D."/>
            <person name="Salzberg S.L."/>
            <person name="Delcher A."/>
            <person name="Utterback T.R."/>
            <person name="Weidman J.F."/>
            <person name="Khouri H.M."/>
            <person name="Gill J."/>
            <person name="Mikula A."/>
            <person name="Bishai W."/>
            <person name="Jacobs W.R. Jr."/>
            <person name="Venter J.C."/>
            <person name="Fraser C.M."/>
        </authorList>
    </citation>
    <scope>NUCLEOTIDE SEQUENCE [LARGE SCALE GENOMIC DNA]</scope>
    <source>
        <strain>CDC 1551 / Oshkosh</strain>
    </source>
</reference>
<sequence>MAAATGGLTPEQIIAVDGAHLWHPYSSIGREAVSPVVAVAAHGAWLTLIRDGQPIEVLDAMSSWWTAIHGHGHPALDQALTTQLRVMNHVMFGGLTHEPAARLAKLLVDITPAGLDTVFFSDSGSVSVEVAAKMALQYWRGRGLPGKRRLMTWRGGYHGDTFLAMSICDPHGGMHSLWTDVLAAQVFAPQVPRDYDPAYSAAFEAQLAQHAGELAAVVVEPVVQGAGGMRFHDPRYLHDLRDICRRYEVLLIFDEIATGFGRTGALFAADHAGVSPDIMCVGKALTGGYLSLAATLCTADVAHTISAGAAGALMHGPTFMANPLACAVSVASVELLLGQDWRTRITELAAGLTAGLDTARALPAVTDVRVCGAIGVIECDRPVDLAVATPAALDRGVWLRPFRNLVYAMPPYICTPAEITQITSAMVEVARLVGSLP</sequence>
<accession>P9WQ80</accession>
<accession>L0T781</accession>
<accession>O06622</accession>
<accession>P0A4X6</accession>
<comment type="function">
    <text evidence="1">Catalyzes the transfer of the alpha-amino group from S-adenosyl-L-methionine (SAM) to 7-keto-8-aminopelargonic acid (KAPA) to form 7,8-diaminopelargonic acid (DAPA). It is the only aminotransferase known to utilize SAM as an amino donor (By similarity).</text>
</comment>
<comment type="catalytic activity">
    <reaction>
        <text>(8S)-8-amino-7-oxononanoate + S-adenosyl-L-methionine = S-adenosyl-4-methylsulfanyl-2-oxobutanoate + (7R,8S)-7,8-diammoniononanoate</text>
        <dbReference type="Rhea" id="RHEA:16861"/>
        <dbReference type="ChEBI" id="CHEBI:16490"/>
        <dbReference type="ChEBI" id="CHEBI:59789"/>
        <dbReference type="ChEBI" id="CHEBI:149468"/>
        <dbReference type="ChEBI" id="CHEBI:149469"/>
        <dbReference type="EC" id="2.6.1.62"/>
    </reaction>
</comment>
<comment type="cofactor">
    <cofactor evidence="1">
        <name>pyridoxal 5'-phosphate</name>
        <dbReference type="ChEBI" id="CHEBI:597326"/>
    </cofactor>
</comment>
<comment type="pathway">
    <text>Cofactor biosynthesis; biotin biosynthesis; 7,8-diaminononanoate from 8-amino-7-oxononanoate (SAM route): step 1/1.</text>
</comment>
<comment type="subunit">
    <text evidence="1">Homodimer.</text>
</comment>
<comment type="subcellular location">
    <subcellularLocation>
        <location evidence="1">Cytoplasm</location>
    </subcellularLocation>
</comment>
<comment type="similarity">
    <text evidence="2">Belongs to the class-III pyridoxal-phosphate-dependent aminotransferase family. BioA subfamily.</text>
</comment>